<gene>
    <name type="primary">rpmB</name>
    <name type="ordered locus">c4461</name>
</gene>
<accession>P0A7M3</accession>
<accession>P02428</accession>
<feature type="initiator methionine" description="Removed" evidence="1">
    <location>
        <position position="1"/>
    </location>
</feature>
<feature type="chain" id="PRO_0000178470" description="Large ribosomal subunit protein bL28">
    <location>
        <begin position="2"/>
        <end position="78"/>
    </location>
</feature>
<keyword id="KW-1185">Reference proteome</keyword>
<keyword id="KW-0687">Ribonucleoprotein</keyword>
<keyword id="KW-0689">Ribosomal protein</keyword>
<sequence>MSRVCQVTGKRPVTGNNRSHALNATKRRFLPNLHSHRFWVESEKRFVTLRVSAKGMRVIDKKGIDTVLAELRARGEKY</sequence>
<evidence type="ECO:0000250" key="1"/>
<evidence type="ECO:0000305" key="2"/>
<comment type="similarity">
    <text evidence="2">Belongs to the bacterial ribosomal protein bL28 family.</text>
</comment>
<proteinExistence type="inferred from homology"/>
<name>RL28_ECOL6</name>
<protein>
    <recommendedName>
        <fullName evidence="2">Large ribosomal subunit protein bL28</fullName>
    </recommendedName>
    <alternativeName>
        <fullName>50S ribosomal protein L28</fullName>
    </alternativeName>
</protein>
<reference key="1">
    <citation type="journal article" date="2002" name="Proc. Natl. Acad. Sci. U.S.A.">
        <title>Extensive mosaic structure revealed by the complete genome sequence of uropathogenic Escherichia coli.</title>
        <authorList>
            <person name="Welch R.A."/>
            <person name="Burland V."/>
            <person name="Plunkett G. III"/>
            <person name="Redford P."/>
            <person name="Roesch P."/>
            <person name="Rasko D."/>
            <person name="Buckles E.L."/>
            <person name="Liou S.-R."/>
            <person name="Boutin A."/>
            <person name="Hackett J."/>
            <person name="Stroud D."/>
            <person name="Mayhew G.F."/>
            <person name="Rose D.J."/>
            <person name="Zhou S."/>
            <person name="Schwartz D.C."/>
            <person name="Perna N.T."/>
            <person name="Mobley H.L.T."/>
            <person name="Donnenberg M.S."/>
            <person name="Blattner F.R."/>
        </authorList>
    </citation>
    <scope>NUCLEOTIDE SEQUENCE [LARGE SCALE GENOMIC DNA]</scope>
    <source>
        <strain>CFT073 / ATCC 700928 / UPEC</strain>
    </source>
</reference>
<dbReference type="EMBL" id="AE014075">
    <property type="protein sequence ID" value="AAN82897.1"/>
    <property type="molecule type" value="Genomic_DNA"/>
</dbReference>
<dbReference type="RefSeq" id="WP_000091955.1">
    <property type="nucleotide sequence ID" value="NZ_CP051263.1"/>
</dbReference>
<dbReference type="SMR" id="P0A7M3"/>
<dbReference type="STRING" id="199310.c4461"/>
<dbReference type="GeneID" id="93778350"/>
<dbReference type="KEGG" id="ecc:c4461"/>
<dbReference type="eggNOG" id="COG0227">
    <property type="taxonomic scope" value="Bacteria"/>
</dbReference>
<dbReference type="HOGENOM" id="CLU_064548_3_1_6"/>
<dbReference type="BioCyc" id="ECOL199310:C4461-MONOMER"/>
<dbReference type="Proteomes" id="UP000001410">
    <property type="component" value="Chromosome"/>
</dbReference>
<dbReference type="GO" id="GO:0022625">
    <property type="term" value="C:cytosolic large ribosomal subunit"/>
    <property type="evidence" value="ECO:0007669"/>
    <property type="project" value="TreeGrafter"/>
</dbReference>
<dbReference type="GO" id="GO:0003735">
    <property type="term" value="F:structural constituent of ribosome"/>
    <property type="evidence" value="ECO:0007669"/>
    <property type="project" value="InterPro"/>
</dbReference>
<dbReference type="GO" id="GO:0006412">
    <property type="term" value="P:translation"/>
    <property type="evidence" value="ECO:0007669"/>
    <property type="project" value="UniProtKB-UniRule"/>
</dbReference>
<dbReference type="FunFam" id="2.30.170.40:FF:000001">
    <property type="entry name" value="50S ribosomal protein L28"/>
    <property type="match status" value="1"/>
</dbReference>
<dbReference type="Gene3D" id="2.30.170.40">
    <property type="entry name" value="Ribosomal protein L28/L24"/>
    <property type="match status" value="1"/>
</dbReference>
<dbReference type="HAMAP" id="MF_00373">
    <property type="entry name" value="Ribosomal_bL28"/>
    <property type="match status" value="1"/>
</dbReference>
<dbReference type="InterPro" id="IPR026569">
    <property type="entry name" value="Ribosomal_bL28"/>
</dbReference>
<dbReference type="InterPro" id="IPR034704">
    <property type="entry name" value="Ribosomal_bL28/bL31-like_sf"/>
</dbReference>
<dbReference type="InterPro" id="IPR001383">
    <property type="entry name" value="Ribosomal_bL28_bact-type"/>
</dbReference>
<dbReference type="InterPro" id="IPR037147">
    <property type="entry name" value="Ribosomal_bL28_sf"/>
</dbReference>
<dbReference type="NCBIfam" id="TIGR00009">
    <property type="entry name" value="L28"/>
    <property type="match status" value="1"/>
</dbReference>
<dbReference type="PANTHER" id="PTHR13528">
    <property type="entry name" value="39S RIBOSOMAL PROTEIN L28, MITOCHONDRIAL"/>
    <property type="match status" value="1"/>
</dbReference>
<dbReference type="PANTHER" id="PTHR13528:SF2">
    <property type="entry name" value="LARGE RIBOSOMAL SUBUNIT PROTEIN BL28M"/>
    <property type="match status" value="1"/>
</dbReference>
<dbReference type="Pfam" id="PF00830">
    <property type="entry name" value="Ribosomal_L28"/>
    <property type="match status" value="1"/>
</dbReference>
<dbReference type="SUPFAM" id="SSF143800">
    <property type="entry name" value="L28p-like"/>
    <property type="match status" value="1"/>
</dbReference>
<organism>
    <name type="scientific">Escherichia coli O6:H1 (strain CFT073 / ATCC 700928 / UPEC)</name>
    <dbReference type="NCBI Taxonomy" id="199310"/>
    <lineage>
        <taxon>Bacteria</taxon>
        <taxon>Pseudomonadati</taxon>
        <taxon>Pseudomonadota</taxon>
        <taxon>Gammaproteobacteria</taxon>
        <taxon>Enterobacterales</taxon>
        <taxon>Enterobacteriaceae</taxon>
        <taxon>Escherichia</taxon>
    </lineage>
</organism>